<reference key="1">
    <citation type="submission" date="2006-09" db="EMBL/GenBank/DDBJ databases">
        <authorList>
            <consortium name="NIH - Mammalian Gene Collection (MGC) project"/>
        </authorList>
    </citation>
    <scope>NUCLEOTIDE SEQUENCE [LARGE SCALE MRNA]</scope>
    <source>
        <strain>Hereford</strain>
        <tissue>Basal ganglia</tissue>
    </source>
</reference>
<dbReference type="EMBL" id="BC123860">
    <property type="protein sequence ID" value="AAI23861.1"/>
    <property type="molecule type" value="mRNA"/>
</dbReference>
<dbReference type="RefSeq" id="NP_001069545.1">
    <property type="nucleotide sequence ID" value="NM_001076077.1"/>
</dbReference>
<dbReference type="RefSeq" id="XP_010801515.1">
    <property type="nucleotide sequence ID" value="XM_010803213.2"/>
</dbReference>
<dbReference type="RefSeq" id="XP_015319306.1">
    <property type="nucleotide sequence ID" value="XM_015463820.1"/>
</dbReference>
<dbReference type="RefSeq" id="XP_015319309.1">
    <property type="nucleotide sequence ID" value="XM_015463823.1"/>
</dbReference>
<dbReference type="RefSeq" id="XP_015319317.1">
    <property type="nucleotide sequence ID" value="XM_015463831.1"/>
</dbReference>
<dbReference type="FunCoup" id="Q08DA4">
    <property type="interactions" value="2189"/>
</dbReference>
<dbReference type="STRING" id="9913.ENSBTAP00000026132"/>
<dbReference type="GlyCosmos" id="Q08DA4">
    <property type="glycosylation" value="6 sites, No reported glycans"/>
</dbReference>
<dbReference type="GlyGen" id="Q08DA4">
    <property type="glycosylation" value="6 sites"/>
</dbReference>
<dbReference type="PaxDb" id="9913-ENSBTAP00000026132"/>
<dbReference type="Ensembl" id="ENSBTAT00000026132.6">
    <property type="protein sequence ID" value="ENSBTAP00000026132.5"/>
    <property type="gene ID" value="ENSBTAG00000019615.7"/>
</dbReference>
<dbReference type="GeneID" id="536504"/>
<dbReference type="KEGG" id="bta:536504"/>
<dbReference type="CTD" id="10745"/>
<dbReference type="VEuPathDB" id="HostDB:ENSBTAG00000019615"/>
<dbReference type="VGNC" id="VGNC:32848">
    <property type="gene designation" value="PHTF1"/>
</dbReference>
<dbReference type="eggNOG" id="ENOG502QQGQ">
    <property type="taxonomic scope" value="Eukaryota"/>
</dbReference>
<dbReference type="GeneTree" id="ENSGT00390000011648"/>
<dbReference type="HOGENOM" id="CLU_013937_0_0_1"/>
<dbReference type="InParanoid" id="Q08DA4"/>
<dbReference type="OMA" id="KMWQTRE"/>
<dbReference type="OrthoDB" id="10066656at2759"/>
<dbReference type="TreeFam" id="TF323570"/>
<dbReference type="Proteomes" id="UP000009136">
    <property type="component" value="Chromosome 3"/>
</dbReference>
<dbReference type="Bgee" id="ENSBTAG00000019615">
    <property type="expression patterns" value="Expressed in spermatid and 108 other cell types or tissues"/>
</dbReference>
<dbReference type="GO" id="GO:0005789">
    <property type="term" value="C:endoplasmic reticulum membrane"/>
    <property type="evidence" value="ECO:0007669"/>
    <property type="project" value="UniProtKB-SubCell"/>
</dbReference>
<dbReference type="GO" id="GO:0005794">
    <property type="term" value="C:Golgi apparatus"/>
    <property type="evidence" value="ECO:0007669"/>
    <property type="project" value="UniProtKB-SubCell"/>
</dbReference>
<dbReference type="InterPro" id="IPR039775">
    <property type="entry name" value="PHTF1/2"/>
</dbReference>
<dbReference type="InterPro" id="IPR021980">
    <property type="entry name" value="PHTF1/2_N"/>
</dbReference>
<dbReference type="PANTHER" id="PTHR12680:SF8">
    <property type="entry name" value="PROTEIN PHTF1"/>
    <property type="match status" value="1"/>
</dbReference>
<dbReference type="PANTHER" id="PTHR12680">
    <property type="entry name" value="PUTATIVE HOMEODOMAIN TRANSCRIPTION FACTOR PHTF"/>
    <property type="match status" value="1"/>
</dbReference>
<dbReference type="Pfam" id="PF12129">
    <property type="entry name" value="PHTF1-2_N"/>
    <property type="match status" value="1"/>
</dbReference>
<evidence type="ECO:0000250" key="1">
    <source>
        <dbReference type="UniProtKB" id="F1M8G0"/>
    </source>
</evidence>
<evidence type="ECO:0000250" key="2">
    <source>
        <dbReference type="UniProtKB" id="Q9QZ09"/>
    </source>
</evidence>
<evidence type="ECO:0000250" key="3">
    <source>
        <dbReference type="UniProtKB" id="Q9UMS5"/>
    </source>
</evidence>
<evidence type="ECO:0000255" key="4"/>
<evidence type="ECO:0000256" key="5">
    <source>
        <dbReference type="SAM" id="MobiDB-lite"/>
    </source>
</evidence>
<evidence type="ECO:0000305" key="6"/>
<accession>Q08DA4</accession>
<keyword id="KW-0256">Endoplasmic reticulum</keyword>
<keyword id="KW-0325">Glycoprotein</keyword>
<keyword id="KW-0333">Golgi apparatus</keyword>
<keyword id="KW-0472">Membrane</keyword>
<keyword id="KW-0597">Phosphoprotein</keyword>
<keyword id="KW-1185">Reference proteome</keyword>
<keyword id="KW-0812">Transmembrane</keyword>
<keyword id="KW-1133">Transmembrane helix</keyword>
<gene>
    <name type="primary">PHTF1</name>
</gene>
<proteinExistence type="evidence at transcript level"/>
<name>PHTF1_BOVIN</name>
<feature type="chain" id="PRO_0000318508" description="Protein PHTF1">
    <location>
        <begin position="1"/>
        <end position="762"/>
    </location>
</feature>
<feature type="transmembrane region" description="Helical" evidence="4">
    <location>
        <begin position="77"/>
        <end position="97"/>
    </location>
</feature>
<feature type="transmembrane region" description="Helical" evidence="4">
    <location>
        <begin position="99"/>
        <end position="119"/>
    </location>
</feature>
<feature type="transmembrane region" description="Helical" evidence="4">
    <location>
        <begin position="121"/>
        <end position="141"/>
    </location>
</feature>
<feature type="transmembrane region" description="Helical" evidence="4">
    <location>
        <begin position="473"/>
        <end position="493"/>
    </location>
</feature>
<feature type="transmembrane region" description="Helical" evidence="4">
    <location>
        <begin position="512"/>
        <end position="532"/>
    </location>
</feature>
<feature type="transmembrane region" description="Helical" evidence="4">
    <location>
        <begin position="611"/>
        <end position="631"/>
    </location>
</feature>
<feature type="transmembrane region" description="Helical" evidence="4">
    <location>
        <begin position="645"/>
        <end position="665"/>
    </location>
</feature>
<feature type="transmembrane region" description="Helical" evidence="4">
    <location>
        <begin position="737"/>
        <end position="757"/>
    </location>
</feature>
<feature type="domain" description="PHTF" evidence="4">
    <location>
        <begin position="6"/>
        <end position="150"/>
    </location>
</feature>
<feature type="region of interest" description="Disordered" evidence="5">
    <location>
        <begin position="152"/>
        <end position="188"/>
    </location>
</feature>
<feature type="region of interest" description="Disordered" evidence="5">
    <location>
        <begin position="344"/>
        <end position="379"/>
    </location>
</feature>
<feature type="region of interest" description="Disordered" evidence="5">
    <location>
        <begin position="393"/>
        <end position="415"/>
    </location>
</feature>
<feature type="compositionally biased region" description="Low complexity" evidence="5">
    <location>
        <begin position="348"/>
        <end position="361"/>
    </location>
</feature>
<feature type="compositionally biased region" description="Basic and acidic residues" evidence="5">
    <location>
        <begin position="365"/>
        <end position="376"/>
    </location>
</feature>
<feature type="modified residue" description="Phosphoserine" evidence="2">
    <location>
        <position position="272"/>
    </location>
</feature>
<feature type="modified residue" description="Phosphoserine" evidence="2">
    <location>
        <position position="276"/>
    </location>
</feature>
<feature type="modified residue" description="Phosphoserine" evidence="2">
    <location>
        <position position="277"/>
    </location>
</feature>
<feature type="modified residue" description="Phosphoserine" evidence="2">
    <location>
        <position position="334"/>
    </location>
</feature>
<feature type="modified residue" description="Phosphoserine" evidence="2">
    <location>
        <position position="336"/>
    </location>
</feature>
<feature type="glycosylation site" description="N-linked (GlcNAc...) asparagine" evidence="4">
    <location>
        <position position="179"/>
    </location>
</feature>
<feature type="glycosylation site" description="N-linked (GlcNAc...) asparagine" evidence="4">
    <location>
        <position position="180"/>
    </location>
</feature>
<feature type="glycosylation site" description="N-linked (GlcNAc...) asparagine" evidence="4">
    <location>
        <position position="197"/>
    </location>
</feature>
<feature type="glycosylation site" description="N-linked (GlcNAc...) asparagine" evidence="4">
    <location>
        <position position="431"/>
    </location>
</feature>
<feature type="glycosylation site" description="N-linked (GlcNAc...) asparagine" evidence="4">
    <location>
        <position position="674"/>
    </location>
</feature>
<feature type="glycosylation site" description="N-linked (GlcNAc...) asparagine" evidence="4">
    <location>
        <position position="733"/>
    </location>
</feature>
<sequence>MASNERDAISWYQKKIGAYDQQIWEKSIEQTQIKGFKNKPKKMGHIKADLIDVDLIRGSTFAKAKPEIPWTSLTRKGLVRVVFFPLFSSWWIQVTSLRIFVWLLLLYLMQVIALVLYFMMPIVNVSEVLGPLCLMLLMGTVHCQIVSTQITRPSGNNGNRRRRKLRKTVNGDGSRENGNNSSDKARGVETLESAPLNGSFWRTLFGNRMKRVKLICNRGTETDYDSGCLHPIIKKRQCRPEIRMWQTREKAKFSDGEKGRRESFRRLGNGISDDLSSDDDGEAQTQMMILRRSVEGASSDNGCEIKSRKSILSRHLNTQVKKTTSKWCSVVRDSDSLAESEFESAAFSQGSRSGMSGGSRSLNMLRRDSESTRHDSETEDMLWDDLLHGPECRSSVTSDSEGAHVSSLHSGTKRDPKEDVFQQNHLFWLQNSSPASDRVSAIIWEGNECKKMDMSVLEISGIIMSRVNAYQQGVGYQMLGNIVTIGLAFFPFLHRLFREKNLDQLKSISAEEILTLFCGAPPVTPIIILSIINFFERLCLTWMFFFMMCVAERTYKQRFLFAKLFSHITSARKARKYEIPHFRLKKVENIKIWLSLRSFLKRRGPQRSVDVVVSSVFLLTLSIAFICCAQVLRGHKTFLNDAYNWEFLIWESALLLFLLRLASLGSETNKKYSNVSILLTEQINLYLKMEKKPNKKEQLTLVNNVLKLSTKLLKELDTPFRLYGLTMNPLIYNITRVVILSAVSGVISDLLGFNIRLWKIKS</sequence>
<protein>
    <recommendedName>
        <fullName evidence="6">Protein PHTF1</fullName>
    </recommendedName>
</protein>
<comment type="subunit">
    <text evidence="2">Interacts with FEM1B.</text>
</comment>
<comment type="subcellular location">
    <subcellularLocation>
        <location evidence="1">Endoplasmic reticulum membrane</location>
        <topology evidence="4">Multi-pass membrane protein</topology>
    </subcellularLocation>
    <subcellularLocation>
        <location evidence="1">Golgi apparatus</location>
        <location evidence="1">cis-Golgi network membrane</location>
        <topology evidence="4">Multi-pass membrane protein</topology>
    </subcellularLocation>
</comment>
<comment type="caution">
    <text evidence="1 3">The PHTF domain was initially defined as an atypical homeodomain, suggesting that this protein could act as a transcription regulator (By similarity). However, the protein is not found in the nucleus and mainly localizes in the endoplasmic reticulum membrane, suggesting that it does not act as a transcription factor (By similarity).</text>
</comment>
<organism>
    <name type="scientific">Bos taurus</name>
    <name type="common">Bovine</name>
    <dbReference type="NCBI Taxonomy" id="9913"/>
    <lineage>
        <taxon>Eukaryota</taxon>
        <taxon>Metazoa</taxon>
        <taxon>Chordata</taxon>
        <taxon>Craniata</taxon>
        <taxon>Vertebrata</taxon>
        <taxon>Euteleostomi</taxon>
        <taxon>Mammalia</taxon>
        <taxon>Eutheria</taxon>
        <taxon>Laurasiatheria</taxon>
        <taxon>Artiodactyla</taxon>
        <taxon>Ruminantia</taxon>
        <taxon>Pecora</taxon>
        <taxon>Bovidae</taxon>
        <taxon>Bovinae</taxon>
        <taxon>Bos</taxon>
    </lineage>
</organism>